<keyword id="KW-0025">Alternative splicing</keyword>
<keyword id="KW-0597">Phosphoprotein</keyword>
<keyword id="KW-1185">Reference proteome</keyword>
<name>LINES_MOUSE</name>
<sequence length="764" mass="85642">MRYILDIKMEIVQEILDQLYRKVLLGTTLEDDVHGYIFYLNPDLSEQDGCPAFPVAQSNASGVLDGMAGQHGPSSHEVATLPGAQECPKRQLQMDRTREMKLLQLTVIDTMLSQVLSDETETHAKEGYRELTEVLLQSVELDSKLMRMLQNSDKLLSHMAAKCLASLLYFQLREKVRSQHKMLSNSWVTFCQKHLSESSESGEAVRCLWILTAVIKEILKDTHSQRAESLKQLLTPFDITFEVFYNSLFSQHFGDFQSPSNLASSLMCFLELLELLVASRIHLKLHFRSQRMLFLKPHALDILAWPIPAFIKRKLVILVKKCLLCKVGEDLCREPAPSLMSPDHLLDSDMLTLADTLLHAVHVGLWKALAVSGKPSCFGGDEVQPGCRLRTGPDHVTLRAASLITVKSLEIKSQNCTSAAEMKVALQTFMSELLAFLKPHLQPSLQPHNPCEWLSRVFIEQDDDMLEAAKASLSIYLQLTREWDASASLTQEKEAWIRSTHGHGCNPHCVFLFFLKNVAFDSTVLLDFLISSETCFLEYFVKYLKLLQKDWAHFLSICKFFAAVESQCGMLVHDPVPSPARGRSTSLTVPHAPASPVGENTCPWLPWASDASSESQSQVMMPKETLPVPANGPPSRTPQSLVDYDSSEASEEETTSEHLANSKQTSLCQERSEEIQGLPRTWEEQKEHSLEPLLSAESSSPFSAKGRVAADGTVWQVGLFLRTVKCLEELQGAIYRLQEKNLFPYNPAALLKLLKGVEAKCVNV</sequence>
<comment type="alternative products">
    <event type="alternative splicing"/>
    <isoform>
        <id>Q3U1D0-1</id>
        <name>1</name>
        <sequence type="displayed"/>
    </isoform>
    <isoform>
        <id>Q3U1D0-2</id>
        <name>2</name>
        <name>Wins2</name>
        <sequence type="described" ref="VSP_039707"/>
    </isoform>
    <isoform>
        <id>Q3U1D0-3</id>
        <name>3</name>
        <sequence type="described" ref="VSP_039708"/>
    </isoform>
</comment>
<comment type="similarity">
    <text evidence="6">Belongs to the protein lines family.</text>
</comment>
<comment type="sequence caution" evidence="6">
    <conflict type="erroneous initiation">
        <sequence resource="EMBL-CDS" id="AAH59228"/>
    </conflict>
    <text>Extended N-terminus.</text>
</comment>
<comment type="sequence caution" evidence="6">
    <conflict type="miscellaneous discrepancy">
        <sequence resource="EMBL-CDS" id="AAH59228"/>
    </conflict>
    <text>Probable intron retention.</text>
</comment>
<proteinExistence type="evidence at protein level"/>
<feature type="chain" id="PRO_0000397874" description="Protein Lines homolog 1">
    <location>
        <begin position="1"/>
        <end position="764"/>
    </location>
</feature>
<feature type="region of interest" description="Disordered" evidence="2">
    <location>
        <begin position="615"/>
        <end position="668"/>
    </location>
</feature>
<feature type="region of interest" description="Disordered" evidence="2">
    <location>
        <begin position="682"/>
        <end position="702"/>
    </location>
</feature>
<feature type="compositionally biased region" description="Acidic residues" evidence="2">
    <location>
        <begin position="645"/>
        <end position="654"/>
    </location>
</feature>
<feature type="compositionally biased region" description="Polar residues" evidence="2">
    <location>
        <begin position="658"/>
        <end position="668"/>
    </location>
</feature>
<feature type="compositionally biased region" description="Low complexity" evidence="2">
    <location>
        <begin position="691"/>
        <end position="702"/>
    </location>
</feature>
<feature type="modified residue" description="Phosphoserine" evidence="8">
    <location>
        <position position="650"/>
    </location>
</feature>
<feature type="splice variant" id="VSP_039707" description="In isoform 2." evidence="3 4">
    <location>
        <begin position="1"/>
        <end position="266"/>
    </location>
</feature>
<feature type="splice variant" id="VSP_039708" description="In isoform 3." evidence="5">
    <location>
        <begin position="176"/>
        <end position="180"/>
    </location>
</feature>
<feature type="sequence conflict" description="In Ref. 2; BAE33568." evidence="6" ref="2">
    <original>P</original>
    <variation>PCA</variation>
    <location>
        <position position="450"/>
    </location>
</feature>
<protein>
    <recommendedName>
        <fullName evidence="7">Protein Lines homolog 1</fullName>
    </recommendedName>
    <alternativeName>
        <fullName evidence="6">Protein Lines homolog 2</fullName>
    </alternativeName>
    <alternativeName>
        <fullName evidence="1">Wnt-signaling molecule Lines homolog 1</fullName>
    </alternativeName>
</protein>
<evidence type="ECO:0000250" key="1">
    <source>
        <dbReference type="UniProtKB" id="Q8NG48"/>
    </source>
</evidence>
<evidence type="ECO:0000256" key="2">
    <source>
        <dbReference type="SAM" id="MobiDB-lite"/>
    </source>
</evidence>
<evidence type="ECO:0000303" key="3">
    <source>
    </source>
</evidence>
<evidence type="ECO:0000303" key="4">
    <source>
    </source>
</evidence>
<evidence type="ECO:0000303" key="5">
    <source>
    </source>
</evidence>
<evidence type="ECO:0000305" key="6"/>
<evidence type="ECO:0000312" key="7">
    <source>
        <dbReference type="MGI" id="MGI:1919885"/>
    </source>
</evidence>
<evidence type="ECO:0007744" key="8">
    <source>
    </source>
</evidence>
<accession>Q3U1D0</accession>
<accession>Q3TBL8</accession>
<accession>Q6PCP6</accession>
<accession>Q8K4P9</accession>
<organism>
    <name type="scientific">Mus musculus</name>
    <name type="common">Mouse</name>
    <dbReference type="NCBI Taxonomy" id="10090"/>
    <lineage>
        <taxon>Eukaryota</taxon>
        <taxon>Metazoa</taxon>
        <taxon>Chordata</taxon>
        <taxon>Craniata</taxon>
        <taxon>Vertebrata</taxon>
        <taxon>Euteleostomi</taxon>
        <taxon>Mammalia</taxon>
        <taxon>Eutheria</taxon>
        <taxon>Euarchontoglires</taxon>
        <taxon>Glires</taxon>
        <taxon>Rodentia</taxon>
        <taxon>Myomorpha</taxon>
        <taxon>Muroidea</taxon>
        <taxon>Muridae</taxon>
        <taxon>Murinae</taxon>
        <taxon>Mus</taxon>
        <taxon>Mus</taxon>
    </lineage>
</organism>
<dbReference type="EMBL" id="AB083158">
    <property type="protein sequence ID" value="BAB93865.1"/>
    <property type="molecule type" value="mRNA"/>
</dbReference>
<dbReference type="EMBL" id="AK171170">
    <property type="protein sequence ID" value="BAE42291.1"/>
    <property type="molecule type" value="mRNA"/>
</dbReference>
<dbReference type="EMBL" id="AK156066">
    <property type="protein sequence ID" value="BAE33568.1"/>
    <property type="molecule type" value="mRNA"/>
</dbReference>
<dbReference type="EMBL" id="BC059228">
    <property type="protein sequence ID" value="AAH59228.1"/>
    <property type="status" value="ALT_SEQ"/>
    <property type="molecule type" value="mRNA"/>
</dbReference>
<dbReference type="EMBL" id="BC138549">
    <property type="protein sequence ID" value="AAI38550.1"/>
    <property type="molecule type" value="mRNA"/>
</dbReference>
<dbReference type="CCDS" id="CCDS21348.2">
    <molecule id="Q3U1D0-1"/>
</dbReference>
<dbReference type="CCDS" id="CCDS57555.1">
    <molecule id="Q3U1D0-3"/>
</dbReference>
<dbReference type="RefSeq" id="NP_001177930.1">
    <molecule id="Q3U1D0-3"/>
    <property type="nucleotide sequence ID" value="NM_001191001.1"/>
</dbReference>
<dbReference type="RefSeq" id="NP_690028.2">
    <molecule id="Q3U1D0-1"/>
    <property type="nucleotide sequence ID" value="NM_152815.2"/>
</dbReference>
<dbReference type="RefSeq" id="XP_006541280.1">
    <molecule id="Q3U1D0-3"/>
    <property type="nucleotide sequence ID" value="XM_006541217.5"/>
</dbReference>
<dbReference type="RefSeq" id="XP_006541281.1">
    <molecule id="Q3U1D0-3"/>
    <property type="nucleotide sequence ID" value="XM_006541218.5"/>
</dbReference>
<dbReference type="RefSeq" id="XP_011249207.1">
    <molecule id="Q3U1D0-2"/>
    <property type="nucleotide sequence ID" value="XM_011250905.4"/>
</dbReference>
<dbReference type="RefSeq" id="XP_017167818.1">
    <molecule id="Q3U1D0-2"/>
    <property type="nucleotide sequence ID" value="XM_017312329.1"/>
</dbReference>
<dbReference type="RefSeq" id="XP_030098874.1">
    <molecule id="Q3U1D0-2"/>
    <property type="nucleotide sequence ID" value="XM_030243014.1"/>
</dbReference>
<dbReference type="RefSeq" id="XP_036009352.1">
    <molecule id="Q3U1D0-2"/>
    <property type="nucleotide sequence ID" value="XM_036153459.1"/>
</dbReference>
<dbReference type="RefSeq" id="XP_036009353.1">
    <molecule id="Q3U1D0-2"/>
    <property type="nucleotide sequence ID" value="XM_036153460.1"/>
</dbReference>
<dbReference type="RefSeq" id="XP_036009354.1">
    <molecule id="Q3U1D0-2"/>
    <property type="nucleotide sequence ID" value="XM_036153461.1"/>
</dbReference>
<dbReference type="FunCoup" id="Q3U1D0">
    <property type="interactions" value="131"/>
</dbReference>
<dbReference type="STRING" id="10090.ENSMUSP00000112404"/>
<dbReference type="iPTMnet" id="Q3U1D0"/>
<dbReference type="PhosphoSitePlus" id="Q3U1D0"/>
<dbReference type="PaxDb" id="10090-ENSMUSP00000112404"/>
<dbReference type="ProteomicsDB" id="265073">
    <molecule id="Q3U1D0-1"/>
</dbReference>
<dbReference type="ProteomicsDB" id="265074">
    <molecule id="Q3U1D0-2"/>
</dbReference>
<dbReference type="ProteomicsDB" id="265075">
    <molecule id="Q3U1D0-3"/>
</dbReference>
<dbReference type="Antibodypedia" id="51579">
    <property type="antibodies" value="71 antibodies from 15 providers"/>
</dbReference>
<dbReference type="Ensembl" id="ENSMUST00000077967.13">
    <molecule id="Q3U1D0-3"/>
    <property type="protein sequence ID" value="ENSMUSP00000077117.7"/>
    <property type="gene ID" value="ENSMUSG00000053091.17"/>
</dbReference>
<dbReference type="Ensembl" id="ENSMUST00000121777.9">
    <molecule id="Q3U1D0-1"/>
    <property type="protein sequence ID" value="ENSMUSP00000112404.3"/>
    <property type="gene ID" value="ENSMUSG00000053091.17"/>
</dbReference>
<dbReference type="GeneID" id="72635"/>
<dbReference type="KEGG" id="mmu:72635"/>
<dbReference type="UCSC" id="uc009hhq.2">
    <molecule id="Q3U1D0-1"/>
    <property type="organism name" value="mouse"/>
</dbReference>
<dbReference type="UCSC" id="uc009hhs.2">
    <molecule id="Q3U1D0-3"/>
    <property type="organism name" value="mouse"/>
</dbReference>
<dbReference type="AGR" id="MGI:1919885"/>
<dbReference type="CTD" id="55180"/>
<dbReference type="MGI" id="MGI:1919885">
    <property type="gene designation" value="Lins1"/>
</dbReference>
<dbReference type="VEuPathDB" id="HostDB:ENSMUSG00000053091"/>
<dbReference type="eggNOG" id="ENOG502QT6F">
    <property type="taxonomic scope" value="Eukaryota"/>
</dbReference>
<dbReference type="GeneTree" id="ENSGT00390000001790"/>
<dbReference type="HOGENOM" id="CLU_026992_0_0_1"/>
<dbReference type="InParanoid" id="Q3U1D0"/>
<dbReference type="OMA" id="FYRIVKC"/>
<dbReference type="OrthoDB" id="8251209at2759"/>
<dbReference type="PhylomeDB" id="Q3U1D0"/>
<dbReference type="TreeFam" id="TF332955"/>
<dbReference type="BioGRID-ORCS" id="72635">
    <property type="hits" value="2 hits in 43 CRISPR screens"/>
</dbReference>
<dbReference type="ChiTaRS" id="Lins1">
    <property type="organism name" value="mouse"/>
</dbReference>
<dbReference type="PRO" id="PR:Q3U1D0"/>
<dbReference type="Proteomes" id="UP000000589">
    <property type="component" value="Chromosome 7"/>
</dbReference>
<dbReference type="RNAct" id="Q3U1D0">
    <property type="molecule type" value="protein"/>
</dbReference>
<dbReference type="Bgee" id="ENSMUSG00000053091">
    <property type="expression patterns" value="Expressed in granulocyte and 135 other cell types or tissues"/>
</dbReference>
<dbReference type="ExpressionAtlas" id="Q3U1D0">
    <property type="expression patterns" value="baseline and differential"/>
</dbReference>
<dbReference type="GO" id="GO:0050890">
    <property type="term" value="P:cognition"/>
    <property type="evidence" value="ECO:0007669"/>
    <property type="project" value="Ensembl"/>
</dbReference>
<dbReference type="InterPro" id="IPR029415">
    <property type="entry name" value="Lines_C"/>
</dbReference>
<dbReference type="InterPro" id="IPR032794">
    <property type="entry name" value="LINES_N"/>
</dbReference>
<dbReference type="InterPro" id="IPR024875">
    <property type="entry name" value="Protein_Lines"/>
</dbReference>
<dbReference type="PANTHER" id="PTHR16057:SF1">
    <property type="entry name" value="PROTEIN LINES HOMOLOG 1"/>
    <property type="match status" value="1"/>
</dbReference>
<dbReference type="PANTHER" id="PTHR16057">
    <property type="entry name" value="WINS1, 2 PROTEIN"/>
    <property type="match status" value="1"/>
</dbReference>
<dbReference type="Pfam" id="PF14695">
    <property type="entry name" value="LINES_C"/>
    <property type="match status" value="1"/>
</dbReference>
<dbReference type="Pfam" id="PF14694">
    <property type="entry name" value="LINES_N"/>
    <property type="match status" value="1"/>
</dbReference>
<reference key="1">
    <citation type="journal article" date="2002" name="Int. J. Mol. Med.">
        <title>Molecular cloning and characterization of human WINS1 and mouse Wins2, homologous to Drosophila segment polarity gene Lines (Lin).</title>
        <authorList>
            <person name="Katoh M."/>
        </authorList>
    </citation>
    <scope>NUCLEOTIDE SEQUENCE [MRNA] (ISOFORM 2)</scope>
</reference>
<reference key="2">
    <citation type="journal article" date="2005" name="Science">
        <title>The transcriptional landscape of the mammalian genome.</title>
        <authorList>
            <person name="Carninci P."/>
            <person name="Kasukawa T."/>
            <person name="Katayama S."/>
            <person name="Gough J."/>
            <person name="Frith M.C."/>
            <person name="Maeda N."/>
            <person name="Oyama R."/>
            <person name="Ravasi T."/>
            <person name="Lenhard B."/>
            <person name="Wells C."/>
            <person name="Kodzius R."/>
            <person name="Shimokawa K."/>
            <person name="Bajic V.B."/>
            <person name="Brenner S.E."/>
            <person name="Batalov S."/>
            <person name="Forrest A.R."/>
            <person name="Zavolan M."/>
            <person name="Davis M.J."/>
            <person name="Wilming L.G."/>
            <person name="Aidinis V."/>
            <person name="Allen J.E."/>
            <person name="Ambesi-Impiombato A."/>
            <person name="Apweiler R."/>
            <person name="Aturaliya R.N."/>
            <person name="Bailey T.L."/>
            <person name="Bansal M."/>
            <person name="Baxter L."/>
            <person name="Beisel K.W."/>
            <person name="Bersano T."/>
            <person name="Bono H."/>
            <person name="Chalk A.M."/>
            <person name="Chiu K.P."/>
            <person name="Choudhary V."/>
            <person name="Christoffels A."/>
            <person name="Clutterbuck D.R."/>
            <person name="Crowe M.L."/>
            <person name="Dalla E."/>
            <person name="Dalrymple B.P."/>
            <person name="de Bono B."/>
            <person name="Della Gatta G."/>
            <person name="di Bernardo D."/>
            <person name="Down T."/>
            <person name="Engstrom P."/>
            <person name="Fagiolini M."/>
            <person name="Faulkner G."/>
            <person name="Fletcher C.F."/>
            <person name="Fukushima T."/>
            <person name="Furuno M."/>
            <person name="Futaki S."/>
            <person name="Gariboldi M."/>
            <person name="Georgii-Hemming P."/>
            <person name="Gingeras T.R."/>
            <person name="Gojobori T."/>
            <person name="Green R.E."/>
            <person name="Gustincich S."/>
            <person name="Harbers M."/>
            <person name="Hayashi Y."/>
            <person name="Hensch T.K."/>
            <person name="Hirokawa N."/>
            <person name="Hill D."/>
            <person name="Huminiecki L."/>
            <person name="Iacono M."/>
            <person name="Ikeo K."/>
            <person name="Iwama A."/>
            <person name="Ishikawa T."/>
            <person name="Jakt M."/>
            <person name="Kanapin A."/>
            <person name="Katoh M."/>
            <person name="Kawasawa Y."/>
            <person name="Kelso J."/>
            <person name="Kitamura H."/>
            <person name="Kitano H."/>
            <person name="Kollias G."/>
            <person name="Krishnan S.P."/>
            <person name="Kruger A."/>
            <person name="Kummerfeld S.K."/>
            <person name="Kurochkin I.V."/>
            <person name="Lareau L.F."/>
            <person name="Lazarevic D."/>
            <person name="Lipovich L."/>
            <person name="Liu J."/>
            <person name="Liuni S."/>
            <person name="McWilliam S."/>
            <person name="Madan Babu M."/>
            <person name="Madera M."/>
            <person name="Marchionni L."/>
            <person name="Matsuda H."/>
            <person name="Matsuzawa S."/>
            <person name="Miki H."/>
            <person name="Mignone F."/>
            <person name="Miyake S."/>
            <person name="Morris K."/>
            <person name="Mottagui-Tabar S."/>
            <person name="Mulder N."/>
            <person name="Nakano N."/>
            <person name="Nakauchi H."/>
            <person name="Ng P."/>
            <person name="Nilsson R."/>
            <person name="Nishiguchi S."/>
            <person name="Nishikawa S."/>
            <person name="Nori F."/>
            <person name="Ohara O."/>
            <person name="Okazaki Y."/>
            <person name="Orlando V."/>
            <person name="Pang K.C."/>
            <person name="Pavan W.J."/>
            <person name="Pavesi G."/>
            <person name="Pesole G."/>
            <person name="Petrovsky N."/>
            <person name="Piazza S."/>
            <person name="Reed J."/>
            <person name="Reid J.F."/>
            <person name="Ring B.Z."/>
            <person name="Ringwald M."/>
            <person name="Rost B."/>
            <person name="Ruan Y."/>
            <person name="Salzberg S.L."/>
            <person name="Sandelin A."/>
            <person name="Schneider C."/>
            <person name="Schoenbach C."/>
            <person name="Sekiguchi K."/>
            <person name="Semple C.A."/>
            <person name="Seno S."/>
            <person name="Sessa L."/>
            <person name="Sheng Y."/>
            <person name="Shibata Y."/>
            <person name="Shimada H."/>
            <person name="Shimada K."/>
            <person name="Silva D."/>
            <person name="Sinclair B."/>
            <person name="Sperling S."/>
            <person name="Stupka E."/>
            <person name="Sugiura K."/>
            <person name="Sultana R."/>
            <person name="Takenaka Y."/>
            <person name="Taki K."/>
            <person name="Tammoja K."/>
            <person name="Tan S.L."/>
            <person name="Tang S."/>
            <person name="Taylor M.S."/>
            <person name="Tegner J."/>
            <person name="Teichmann S.A."/>
            <person name="Ueda H.R."/>
            <person name="van Nimwegen E."/>
            <person name="Verardo R."/>
            <person name="Wei C.L."/>
            <person name="Yagi K."/>
            <person name="Yamanishi H."/>
            <person name="Zabarovsky E."/>
            <person name="Zhu S."/>
            <person name="Zimmer A."/>
            <person name="Hide W."/>
            <person name="Bult C."/>
            <person name="Grimmond S.M."/>
            <person name="Teasdale R.D."/>
            <person name="Liu E.T."/>
            <person name="Brusic V."/>
            <person name="Quackenbush J."/>
            <person name="Wahlestedt C."/>
            <person name="Mattick J.S."/>
            <person name="Hume D.A."/>
            <person name="Kai C."/>
            <person name="Sasaki D."/>
            <person name="Tomaru Y."/>
            <person name="Fukuda S."/>
            <person name="Kanamori-Katayama M."/>
            <person name="Suzuki M."/>
            <person name="Aoki J."/>
            <person name="Arakawa T."/>
            <person name="Iida J."/>
            <person name="Imamura K."/>
            <person name="Itoh M."/>
            <person name="Kato T."/>
            <person name="Kawaji H."/>
            <person name="Kawagashira N."/>
            <person name="Kawashima T."/>
            <person name="Kojima M."/>
            <person name="Kondo S."/>
            <person name="Konno H."/>
            <person name="Nakano K."/>
            <person name="Ninomiya N."/>
            <person name="Nishio T."/>
            <person name="Okada M."/>
            <person name="Plessy C."/>
            <person name="Shibata K."/>
            <person name="Shiraki T."/>
            <person name="Suzuki S."/>
            <person name="Tagami M."/>
            <person name="Waki K."/>
            <person name="Watahiki A."/>
            <person name="Okamura-Oho Y."/>
            <person name="Suzuki H."/>
            <person name="Kawai J."/>
            <person name="Hayashizaki Y."/>
        </authorList>
    </citation>
    <scope>NUCLEOTIDE SEQUENCE [LARGE SCALE MRNA] (ISOFORMS 1 AND 3)</scope>
    <source>
        <strain>NOD</strain>
        <tissue>Spleen</tissue>
    </source>
</reference>
<reference key="3">
    <citation type="journal article" date="2004" name="Genome Res.">
        <title>The status, quality, and expansion of the NIH full-length cDNA project: the Mammalian Gene Collection (MGC).</title>
        <authorList>
            <consortium name="The MGC Project Team"/>
        </authorList>
    </citation>
    <scope>NUCLEOTIDE SEQUENCE [LARGE SCALE MRNA] (ISOFORM 2)</scope>
    <source>
        <strain>C57BL/6J</strain>
        <tissue>Embryonic brain</tissue>
    </source>
</reference>
<reference key="4">
    <citation type="journal article" date="2010" name="Cell">
        <title>A tissue-specific atlas of mouse protein phosphorylation and expression.</title>
        <authorList>
            <person name="Huttlin E.L."/>
            <person name="Jedrychowski M.P."/>
            <person name="Elias J.E."/>
            <person name="Goswami T."/>
            <person name="Rad R."/>
            <person name="Beausoleil S.A."/>
            <person name="Villen J."/>
            <person name="Haas W."/>
            <person name="Sowa M.E."/>
            <person name="Gygi S.P."/>
        </authorList>
    </citation>
    <scope>PHOSPHORYLATION [LARGE SCALE ANALYSIS] AT SER-650</scope>
    <scope>IDENTIFICATION BY MASS SPECTROMETRY [LARGE SCALE ANALYSIS]</scope>
    <source>
        <tissue>Testis</tissue>
    </source>
</reference>
<gene>
    <name evidence="7" type="primary">Lins1</name>
    <name evidence="6" type="synonym">Lins</name>
    <name evidence="7" type="synonym">Lins2</name>
    <name evidence="7" type="synonym">Wins2</name>
</gene>